<gene>
    <name evidence="1" type="primary">rutC</name>
    <name type="ordered locus">ECS88_1026</name>
</gene>
<keyword id="KW-0378">Hydrolase</keyword>
<keyword id="KW-1185">Reference proteome</keyword>
<sequence length="128" mass="13763">MPKSVIIPAGSSAPLAPFVPGTLADGVVYVSGTLAFDQHNNVLFADDPKAQTRHVLETIRKVIETAGGTMADVTFNSIFITDWKNYAAINEIYAEFFPGDKPARFCIQCGLVKPDALVEIATIAHIAK</sequence>
<evidence type="ECO:0000255" key="1">
    <source>
        <dbReference type="HAMAP-Rule" id="MF_00831"/>
    </source>
</evidence>
<comment type="function">
    <text evidence="1">Involved in pyrimidine catabolism. Catalyzes the deamination of 3-aminoacrylate to malonic semialdehyde, a reaction that can also occur spontaneously. RutC may facilitate the reaction and modulate the metabolic fitness, rather than catalyzing essential functions.</text>
</comment>
<comment type="catalytic activity">
    <reaction evidence="1">
        <text>(Z)-3-aminoacrylate + H2O + H(+) = 3-oxopropanoate + NH4(+)</text>
        <dbReference type="Rhea" id="RHEA:34947"/>
        <dbReference type="ChEBI" id="CHEBI:15377"/>
        <dbReference type="ChEBI" id="CHEBI:15378"/>
        <dbReference type="ChEBI" id="CHEBI:28938"/>
        <dbReference type="ChEBI" id="CHEBI:33190"/>
        <dbReference type="ChEBI" id="CHEBI:59894"/>
    </reaction>
</comment>
<comment type="subunit">
    <text evidence="1">Homotrimer.</text>
</comment>
<comment type="similarity">
    <text evidence="1">Belongs to the RutC family.</text>
</comment>
<accession>B7MIF7</accession>
<reference key="1">
    <citation type="journal article" date="2009" name="PLoS Genet.">
        <title>Organised genome dynamics in the Escherichia coli species results in highly diverse adaptive paths.</title>
        <authorList>
            <person name="Touchon M."/>
            <person name="Hoede C."/>
            <person name="Tenaillon O."/>
            <person name="Barbe V."/>
            <person name="Baeriswyl S."/>
            <person name="Bidet P."/>
            <person name="Bingen E."/>
            <person name="Bonacorsi S."/>
            <person name="Bouchier C."/>
            <person name="Bouvet O."/>
            <person name="Calteau A."/>
            <person name="Chiapello H."/>
            <person name="Clermont O."/>
            <person name="Cruveiller S."/>
            <person name="Danchin A."/>
            <person name="Diard M."/>
            <person name="Dossat C."/>
            <person name="Karoui M.E."/>
            <person name="Frapy E."/>
            <person name="Garry L."/>
            <person name="Ghigo J.M."/>
            <person name="Gilles A.M."/>
            <person name="Johnson J."/>
            <person name="Le Bouguenec C."/>
            <person name="Lescat M."/>
            <person name="Mangenot S."/>
            <person name="Martinez-Jehanne V."/>
            <person name="Matic I."/>
            <person name="Nassif X."/>
            <person name="Oztas S."/>
            <person name="Petit M.A."/>
            <person name="Pichon C."/>
            <person name="Rouy Z."/>
            <person name="Ruf C.S."/>
            <person name="Schneider D."/>
            <person name="Tourret J."/>
            <person name="Vacherie B."/>
            <person name="Vallenet D."/>
            <person name="Medigue C."/>
            <person name="Rocha E.P.C."/>
            <person name="Denamur E."/>
        </authorList>
    </citation>
    <scope>NUCLEOTIDE SEQUENCE [LARGE SCALE GENOMIC DNA]</scope>
    <source>
        <strain>S88 / ExPEC</strain>
    </source>
</reference>
<name>RUTC_ECO45</name>
<organism>
    <name type="scientific">Escherichia coli O45:K1 (strain S88 / ExPEC)</name>
    <dbReference type="NCBI Taxonomy" id="585035"/>
    <lineage>
        <taxon>Bacteria</taxon>
        <taxon>Pseudomonadati</taxon>
        <taxon>Pseudomonadota</taxon>
        <taxon>Gammaproteobacteria</taxon>
        <taxon>Enterobacterales</taxon>
        <taxon>Enterobacteriaceae</taxon>
        <taxon>Escherichia</taxon>
    </lineage>
</organism>
<protein>
    <recommendedName>
        <fullName evidence="1">3-aminoacrylate deaminase RutC</fullName>
        <shortName evidence="1">3-AA deaminase</shortName>
        <ecNumber evidence="1">3.5.-.-</ecNumber>
    </recommendedName>
</protein>
<dbReference type="EC" id="3.5.-.-" evidence="1"/>
<dbReference type="EMBL" id="CU928161">
    <property type="protein sequence ID" value="CAR02357.1"/>
    <property type="molecule type" value="Genomic_DNA"/>
</dbReference>
<dbReference type="RefSeq" id="WP_001126780.1">
    <property type="nucleotide sequence ID" value="NC_011742.1"/>
</dbReference>
<dbReference type="SMR" id="B7MIF7"/>
<dbReference type="GeneID" id="75171086"/>
<dbReference type="KEGG" id="ecz:ECS88_1026"/>
<dbReference type="HOGENOM" id="CLU_100715_7_3_6"/>
<dbReference type="Proteomes" id="UP000000747">
    <property type="component" value="Chromosome"/>
</dbReference>
<dbReference type="GO" id="GO:0005829">
    <property type="term" value="C:cytosol"/>
    <property type="evidence" value="ECO:0007669"/>
    <property type="project" value="TreeGrafter"/>
</dbReference>
<dbReference type="GO" id="GO:0019239">
    <property type="term" value="F:deaminase activity"/>
    <property type="evidence" value="ECO:0007669"/>
    <property type="project" value="TreeGrafter"/>
</dbReference>
<dbReference type="GO" id="GO:0019740">
    <property type="term" value="P:nitrogen utilization"/>
    <property type="evidence" value="ECO:0007669"/>
    <property type="project" value="UniProtKB-UniRule"/>
</dbReference>
<dbReference type="GO" id="GO:0006212">
    <property type="term" value="P:uracil catabolic process"/>
    <property type="evidence" value="ECO:0007669"/>
    <property type="project" value="UniProtKB-UniRule"/>
</dbReference>
<dbReference type="CDD" id="cd00448">
    <property type="entry name" value="YjgF_YER057c_UK114_family"/>
    <property type="match status" value="1"/>
</dbReference>
<dbReference type="FunFam" id="3.30.1330.40:FF:000003">
    <property type="entry name" value="Putative aminoacrylate peracid reductase RutC"/>
    <property type="match status" value="1"/>
</dbReference>
<dbReference type="Gene3D" id="3.30.1330.40">
    <property type="entry name" value="RutC-like"/>
    <property type="match status" value="1"/>
</dbReference>
<dbReference type="HAMAP" id="MF_00831">
    <property type="entry name" value="RutC"/>
    <property type="match status" value="1"/>
</dbReference>
<dbReference type="InterPro" id="IPR019897">
    <property type="entry name" value="RidA_CS"/>
</dbReference>
<dbReference type="InterPro" id="IPR019898">
    <property type="entry name" value="RutC"/>
</dbReference>
<dbReference type="InterPro" id="IPR035959">
    <property type="entry name" value="RutC-like_sf"/>
</dbReference>
<dbReference type="InterPro" id="IPR006175">
    <property type="entry name" value="YjgF/YER057c/UK114"/>
</dbReference>
<dbReference type="NCBIfam" id="TIGR03610">
    <property type="entry name" value="RutC"/>
    <property type="match status" value="1"/>
</dbReference>
<dbReference type="PANTHER" id="PTHR11803">
    <property type="entry name" value="2-IMINOBUTANOATE/2-IMINOPROPANOATE DEAMINASE RIDA"/>
    <property type="match status" value="1"/>
</dbReference>
<dbReference type="PANTHER" id="PTHR11803:SF58">
    <property type="entry name" value="PROTEIN HMF1-RELATED"/>
    <property type="match status" value="1"/>
</dbReference>
<dbReference type="Pfam" id="PF01042">
    <property type="entry name" value="Ribonuc_L-PSP"/>
    <property type="match status" value="1"/>
</dbReference>
<dbReference type="SUPFAM" id="SSF55298">
    <property type="entry name" value="YjgF-like"/>
    <property type="match status" value="1"/>
</dbReference>
<dbReference type="PROSITE" id="PS01094">
    <property type="entry name" value="UPF0076"/>
    <property type="match status" value="1"/>
</dbReference>
<feature type="chain" id="PRO_0000402743" description="3-aminoacrylate deaminase RutC">
    <location>
        <begin position="1"/>
        <end position="128"/>
    </location>
</feature>
<proteinExistence type="inferred from homology"/>